<evidence type="ECO:0000255" key="1">
    <source>
        <dbReference type="HAMAP-Rule" id="MF_00185"/>
    </source>
</evidence>
<feature type="chain" id="PRO_0000377223" description="tRNA dimethylallyltransferase">
    <location>
        <begin position="1"/>
        <end position="324"/>
    </location>
</feature>
<feature type="region of interest" description="Interaction with substrate tRNA" evidence="1">
    <location>
        <begin position="40"/>
        <end position="43"/>
    </location>
</feature>
<feature type="binding site" evidence="1">
    <location>
        <begin position="15"/>
        <end position="22"/>
    </location>
    <ligand>
        <name>ATP</name>
        <dbReference type="ChEBI" id="CHEBI:30616"/>
    </ligand>
</feature>
<feature type="binding site" evidence="1">
    <location>
        <begin position="17"/>
        <end position="22"/>
    </location>
    <ligand>
        <name>substrate</name>
    </ligand>
</feature>
<feature type="site" description="Interaction with substrate tRNA" evidence="1">
    <location>
        <position position="111"/>
    </location>
</feature>
<feature type="site" description="Interaction with substrate tRNA" evidence="1">
    <location>
        <position position="134"/>
    </location>
</feature>
<proteinExistence type="inferred from homology"/>
<name>MIAA_MOOTA</name>
<keyword id="KW-0067">ATP-binding</keyword>
<keyword id="KW-0460">Magnesium</keyword>
<keyword id="KW-0547">Nucleotide-binding</keyword>
<keyword id="KW-0808">Transferase</keyword>
<keyword id="KW-0819">tRNA processing</keyword>
<comment type="function">
    <text evidence="1">Catalyzes the transfer of a dimethylallyl group onto the adenine at position 37 in tRNAs that read codons beginning with uridine, leading to the formation of N6-(dimethylallyl)adenosine (i(6)A).</text>
</comment>
<comment type="catalytic activity">
    <reaction evidence="1">
        <text>adenosine(37) in tRNA + dimethylallyl diphosphate = N(6)-dimethylallyladenosine(37) in tRNA + diphosphate</text>
        <dbReference type="Rhea" id="RHEA:26482"/>
        <dbReference type="Rhea" id="RHEA-COMP:10162"/>
        <dbReference type="Rhea" id="RHEA-COMP:10375"/>
        <dbReference type="ChEBI" id="CHEBI:33019"/>
        <dbReference type="ChEBI" id="CHEBI:57623"/>
        <dbReference type="ChEBI" id="CHEBI:74411"/>
        <dbReference type="ChEBI" id="CHEBI:74415"/>
        <dbReference type="EC" id="2.5.1.75"/>
    </reaction>
</comment>
<comment type="cofactor">
    <cofactor evidence="1">
        <name>Mg(2+)</name>
        <dbReference type="ChEBI" id="CHEBI:18420"/>
    </cofactor>
</comment>
<comment type="subunit">
    <text evidence="1">Monomer.</text>
</comment>
<comment type="similarity">
    <text evidence="1">Belongs to the IPP transferase family.</text>
</comment>
<gene>
    <name evidence="1" type="primary">miaA</name>
    <name type="ordered locus">Moth_1115</name>
</gene>
<dbReference type="EC" id="2.5.1.75" evidence="1"/>
<dbReference type="EMBL" id="CP000232">
    <property type="protein sequence ID" value="ABC19429.1"/>
    <property type="molecule type" value="Genomic_DNA"/>
</dbReference>
<dbReference type="RefSeq" id="YP_429972.1">
    <property type="nucleotide sequence ID" value="NC_007644.1"/>
</dbReference>
<dbReference type="SMR" id="Q2RJG0"/>
<dbReference type="STRING" id="264732.Moth_1115"/>
<dbReference type="EnsemblBacteria" id="ABC19429">
    <property type="protein sequence ID" value="ABC19429"/>
    <property type="gene ID" value="Moth_1115"/>
</dbReference>
<dbReference type="KEGG" id="mta:Moth_1115"/>
<dbReference type="PATRIC" id="fig|264732.11.peg.1196"/>
<dbReference type="eggNOG" id="COG0324">
    <property type="taxonomic scope" value="Bacteria"/>
</dbReference>
<dbReference type="HOGENOM" id="CLU_032616_0_1_9"/>
<dbReference type="OrthoDB" id="9776390at2"/>
<dbReference type="GO" id="GO:0005524">
    <property type="term" value="F:ATP binding"/>
    <property type="evidence" value="ECO:0007669"/>
    <property type="project" value="UniProtKB-UniRule"/>
</dbReference>
<dbReference type="GO" id="GO:0052381">
    <property type="term" value="F:tRNA dimethylallyltransferase activity"/>
    <property type="evidence" value="ECO:0007669"/>
    <property type="project" value="UniProtKB-UniRule"/>
</dbReference>
<dbReference type="GO" id="GO:0006400">
    <property type="term" value="P:tRNA modification"/>
    <property type="evidence" value="ECO:0007669"/>
    <property type="project" value="TreeGrafter"/>
</dbReference>
<dbReference type="FunFam" id="1.10.20.140:FF:000001">
    <property type="entry name" value="tRNA dimethylallyltransferase"/>
    <property type="match status" value="1"/>
</dbReference>
<dbReference type="Gene3D" id="1.10.20.140">
    <property type="match status" value="1"/>
</dbReference>
<dbReference type="Gene3D" id="3.40.50.300">
    <property type="entry name" value="P-loop containing nucleotide triphosphate hydrolases"/>
    <property type="match status" value="1"/>
</dbReference>
<dbReference type="HAMAP" id="MF_00185">
    <property type="entry name" value="IPP_trans"/>
    <property type="match status" value="1"/>
</dbReference>
<dbReference type="InterPro" id="IPR039657">
    <property type="entry name" value="Dimethylallyltransferase"/>
</dbReference>
<dbReference type="InterPro" id="IPR018022">
    <property type="entry name" value="IPT"/>
</dbReference>
<dbReference type="InterPro" id="IPR027417">
    <property type="entry name" value="P-loop_NTPase"/>
</dbReference>
<dbReference type="NCBIfam" id="TIGR00174">
    <property type="entry name" value="miaA"/>
    <property type="match status" value="1"/>
</dbReference>
<dbReference type="PANTHER" id="PTHR11088">
    <property type="entry name" value="TRNA DIMETHYLALLYLTRANSFERASE"/>
    <property type="match status" value="1"/>
</dbReference>
<dbReference type="PANTHER" id="PTHR11088:SF60">
    <property type="entry name" value="TRNA DIMETHYLALLYLTRANSFERASE"/>
    <property type="match status" value="1"/>
</dbReference>
<dbReference type="Pfam" id="PF01715">
    <property type="entry name" value="IPPT"/>
    <property type="match status" value="1"/>
</dbReference>
<dbReference type="SUPFAM" id="SSF52540">
    <property type="entry name" value="P-loop containing nucleoside triphosphate hydrolases"/>
    <property type="match status" value="2"/>
</dbReference>
<protein>
    <recommendedName>
        <fullName evidence="1">tRNA dimethylallyltransferase</fullName>
        <ecNumber evidence="1">2.5.1.75</ecNumber>
    </recommendedName>
    <alternativeName>
        <fullName evidence="1">Dimethylallyl diphosphate:tRNA dimethylallyltransferase</fullName>
        <shortName evidence="1">DMAPP:tRNA dimethylallyltransferase</shortName>
        <shortName evidence="1">DMATase</shortName>
    </alternativeName>
    <alternativeName>
        <fullName evidence="1">Isopentenyl-diphosphate:tRNA isopentenyltransferase</fullName>
        <shortName evidence="1">IPP transferase</shortName>
        <shortName evidence="1">IPPT</shortName>
        <shortName evidence="1">IPTase</shortName>
    </alternativeName>
</protein>
<sequence>MSTLSTKEPLAAIVGPTATGKSTIALKVAARLGAEIISVDSAQVYRGMDIGTAKLLPEERVGPDGRPIPHHLIDIVDPDEPFSVADYQKLARQTITAIIRRGHLPLLVGGTGLYYQAVVDPYRFTPEGGDPRVRQELEELAAKFGDAYLHEQLKRVDPEAAKRIHPHDRRRLVRALEVFKTTGQPISAALAWRRQQESPYHLAAVALSMPRPLLYRRIEARVDAMIAAGLIEEVSRLLARYDYRLPALQALGYKEIGAYLRKEIELEEAIAILKRNTRRLAKRQLTWFRRDRRLHWWEVDPDKIEEISAAIADFISRTIDINVE</sequence>
<accession>Q2RJG0</accession>
<reference key="1">
    <citation type="journal article" date="2008" name="Environ. Microbiol.">
        <title>The complete genome sequence of Moorella thermoacetica (f. Clostridium thermoaceticum).</title>
        <authorList>
            <person name="Pierce E."/>
            <person name="Xie G."/>
            <person name="Barabote R.D."/>
            <person name="Saunders E."/>
            <person name="Han C.S."/>
            <person name="Detter J.C."/>
            <person name="Richardson P."/>
            <person name="Brettin T.S."/>
            <person name="Das A."/>
            <person name="Ljungdahl L.G."/>
            <person name="Ragsdale S.W."/>
        </authorList>
    </citation>
    <scope>NUCLEOTIDE SEQUENCE [LARGE SCALE GENOMIC DNA]</scope>
    <source>
        <strain>ATCC 39073 / JCM 9320</strain>
    </source>
</reference>
<organism>
    <name type="scientific">Moorella thermoacetica (strain ATCC 39073 / JCM 9320)</name>
    <dbReference type="NCBI Taxonomy" id="264732"/>
    <lineage>
        <taxon>Bacteria</taxon>
        <taxon>Bacillati</taxon>
        <taxon>Bacillota</taxon>
        <taxon>Clostridia</taxon>
        <taxon>Moorellales</taxon>
        <taxon>Moorellaceae</taxon>
        <taxon>Moorella</taxon>
    </lineage>
</organism>